<feature type="chain" id="PRO_0000172549" description="Phosphatidylglycerol--prolipoprotein diacylglyceryl transferase">
    <location>
        <begin position="1"/>
        <end position="270"/>
    </location>
</feature>
<feature type="transmembrane region" description="Helical" evidence="1">
    <location>
        <begin position="19"/>
        <end position="39"/>
    </location>
</feature>
<feature type="transmembrane region" description="Helical" evidence="1">
    <location>
        <begin position="56"/>
        <end position="76"/>
    </location>
</feature>
<feature type="transmembrane region" description="Helical" evidence="1">
    <location>
        <begin position="92"/>
        <end position="112"/>
    </location>
</feature>
<feature type="transmembrane region" description="Helical" evidence="1">
    <location>
        <begin position="116"/>
        <end position="136"/>
    </location>
</feature>
<feature type="transmembrane region" description="Helical" evidence="1">
    <location>
        <begin position="178"/>
        <end position="198"/>
    </location>
</feature>
<feature type="transmembrane region" description="Helical" evidence="1">
    <location>
        <begin position="206"/>
        <end position="226"/>
    </location>
</feature>
<feature type="transmembrane region" description="Helical" evidence="1">
    <location>
        <begin position="236"/>
        <end position="256"/>
    </location>
</feature>
<feature type="binding site" evidence="1">
    <location>
        <position position="138"/>
    </location>
    <ligand>
        <name>a 1,2-diacyl-sn-glycero-3-phospho-(1'-sn-glycerol)</name>
        <dbReference type="ChEBI" id="CHEBI:64716"/>
    </ligand>
</feature>
<dbReference type="EC" id="2.5.1.145" evidence="1"/>
<dbReference type="EMBL" id="AE016877">
    <property type="protein sequence ID" value="AAP12028.1"/>
    <property type="molecule type" value="Genomic_DNA"/>
</dbReference>
<dbReference type="RefSeq" id="NP_834827.1">
    <property type="nucleotide sequence ID" value="NC_004722.1"/>
</dbReference>
<dbReference type="RefSeq" id="WP_000922849.1">
    <property type="nucleotide sequence ID" value="NZ_CP138336.1"/>
</dbReference>
<dbReference type="SMR" id="Q815I7"/>
<dbReference type="STRING" id="226900.BC_5163"/>
<dbReference type="KEGG" id="bce:BC5163"/>
<dbReference type="PATRIC" id="fig|226900.8.peg.5321"/>
<dbReference type="HOGENOM" id="CLU_013386_0_1_9"/>
<dbReference type="OrthoDB" id="871140at2"/>
<dbReference type="UniPathway" id="UPA00664"/>
<dbReference type="Proteomes" id="UP000001417">
    <property type="component" value="Chromosome"/>
</dbReference>
<dbReference type="GO" id="GO:0005886">
    <property type="term" value="C:plasma membrane"/>
    <property type="evidence" value="ECO:0000318"/>
    <property type="project" value="GO_Central"/>
</dbReference>
<dbReference type="GO" id="GO:0008961">
    <property type="term" value="F:phosphatidylglycerol-prolipoprotein diacylglyceryl transferase activity"/>
    <property type="evidence" value="ECO:0000318"/>
    <property type="project" value="GO_Central"/>
</dbReference>
<dbReference type="GO" id="GO:0042158">
    <property type="term" value="P:lipoprotein biosynthetic process"/>
    <property type="evidence" value="ECO:0000318"/>
    <property type="project" value="GO_Central"/>
</dbReference>
<dbReference type="HAMAP" id="MF_01147">
    <property type="entry name" value="Lgt"/>
    <property type="match status" value="1"/>
</dbReference>
<dbReference type="InterPro" id="IPR001640">
    <property type="entry name" value="Lgt"/>
</dbReference>
<dbReference type="NCBIfam" id="TIGR00544">
    <property type="entry name" value="lgt"/>
    <property type="match status" value="1"/>
</dbReference>
<dbReference type="PANTHER" id="PTHR30589:SF0">
    <property type="entry name" value="PHOSPHATIDYLGLYCEROL--PROLIPOPROTEIN DIACYLGLYCERYL TRANSFERASE"/>
    <property type="match status" value="1"/>
</dbReference>
<dbReference type="PANTHER" id="PTHR30589">
    <property type="entry name" value="PROLIPOPROTEIN DIACYLGLYCERYL TRANSFERASE"/>
    <property type="match status" value="1"/>
</dbReference>
<dbReference type="Pfam" id="PF01790">
    <property type="entry name" value="LGT"/>
    <property type="match status" value="1"/>
</dbReference>
<dbReference type="PROSITE" id="PS01311">
    <property type="entry name" value="LGT"/>
    <property type="match status" value="1"/>
</dbReference>
<proteinExistence type="inferred from homology"/>
<organism>
    <name type="scientific">Bacillus cereus (strain ATCC 14579 / DSM 31 / CCUG 7414 / JCM 2152 / NBRC 15305 / NCIMB 9373 / NCTC 2599 / NRRL B-3711)</name>
    <dbReference type="NCBI Taxonomy" id="226900"/>
    <lineage>
        <taxon>Bacteria</taxon>
        <taxon>Bacillati</taxon>
        <taxon>Bacillota</taxon>
        <taxon>Bacilli</taxon>
        <taxon>Bacillales</taxon>
        <taxon>Bacillaceae</taxon>
        <taxon>Bacillus</taxon>
        <taxon>Bacillus cereus group</taxon>
    </lineage>
</organism>
<reference key="1">
    <citation type="journal article" date="2003" name="Nature">
        <title>Genome sequence of Bacillus cereus and comparative analysis with Bacillus anthracis.</title>
        <authorList>
            <person name="Ivanova N."/>
            <person name="Sorokin A."/>
            <person name="Anderson I."/>
            <person name="Galleron N."/>
            <person name="Candelon B."/>
            <person name="Kapatral V."/>
            <person name="Bhattacharyya A."/>
            <person name="Reznik G."/>
            <person name="Mikhailova N."/>
            <person name="Lapidus A."/>
            <person name="Chu L."/>
            <person name="Mazur M."/>
            <person name="Goltsman E."/>
            <person name="Larsen N."/>
            <person name="D'Souza M."/>
            <person name="Walunas T."/>
            <person name="Grechkin Y."/>
            <person name="Pusch G."/>
            <person name="Haselkorn R."/>
            <person name="Fonstein M."/>
            <person name="Ehrlich S.D."/>
            <person name="Overbeek R."/>
            <person name="Kyrpides N.C."/>
        </authorList>
    </citation>
    <scope>NUCLEOTIDE SEQUENCE [LARGE SCALE GENOMIC DNA]</scope>
    <source>
        <strain>ATCC 14579 / DSM 31 / CCUG 7414 / JCM 2152 / NBRC 15305 / NCIMB 9373 / NCTC 2599 / NRRL B-3711</strain>
    </source>
</reference>
<name>LGT_BACCR</name>
<gene>
    <name evidence="1" type="primary">lgt</name>
    <name type="ordered locus">BC_5163</name>
</gene>
<comment type="function">
    <text evidence="1">Catalyzes the transfer of the diacylglyceryl group from phosphatidylglycerol to the sulfhydryl group of the N-terminal cysteine of a prolipoprotein, the first step in the formation of mature lipoproteins.</text>
</comment>
<comment type="catalytic activity">
    <reaction evidence="1">
        <text>L-cysteinyl-[prolipoprotein] + a 1,2-diacyl-sn-glycero-3-phospho-(1'-sn-glycerol) = an S-1,2-diacyl-sn-glyceryl-L-cysteinyl-[prolipoprotein] + sn-glycerol 1-phosphate + H(+)</text>
        <dbReference type="Rhea" id="RHEA:56712"/>
        <dbReference type="Rhea" id="RHEA-COMP:14679"/>
        <dbReference type="Rhea" id="RHEA-COMP:14680"/>
        <dbReference type="ChEBI" id="CHEBI:15378"/>
        <dbReference type="ChEBI" id="CHEBI:29950"/>
        <dbReference type="ChEBI" id="CHEBI:57685"/>
        <dbReference type="ChEBI" id="CHEBI:64716"/>
        <dbReference type="ChEBI" id="CHEBI:140658"/>
        <dbReference type="EC" id="2.5.1.145"/>
    </reaction>
</comment>
<comment type="pathway">
    <text evidence="1">Protein modification; lipoprotein biosynthesis (diacylglyceryl transfer).</text>
</comment>
<comment type="subcellular location">
    <subcellularLocation>
        <location evidence="1">Cell membrane</location>
        <topology evidence="1">Multi-pass membrane protein</topology>
    </subcellularLocation>
</comment>
<comment type="similarity">
    <text evidence="1">Belongs to the Lgt family.</text>
</comment>
<evidence type="ECO:0000255" key="1">
    <source>
        <dbReference type="HAMAP-Rule" id="MF_01147"/>
    </source>
</evidence>
<keyword id="KW-1003">Cell membrane</keyword>
<keyword id="KW-0472">Membrane</keyword>
<keyword id="KW-1185">Reference proteome</keyword>
<keyword id="KW-0808">Transferase</keyword>
<keyword id="KW-0812">Transmembrane</keyword>
<keyword id="KW-1133">Transmembrane helix</keyword>
<sequence length="270" mass="30656">MLLASVPQLDRVAIQLGPFPVYWYGIIIGTGVLLGLWLATREGERLGIPKDTFVDLVLIAVPIAILFARMYYVIFEWEYYAQNPSQIINIRQGGLAIHGGLIGAVITGVLFAKRRGLSFWKLADIAAPSILLGQAIGRWGNFMNQEAHGDEVTRQFLEGLHLPDFIINQMYIEGVYYHPTFLYESLWNFAGVILLLALRKVNLRRGELFFTYLIWYSVGRFFVEGLRTDSLMLGPLRIAQVMSIGLVVISIIFIIVRRKMGQADKRYLEN</sequence>
<accession>Q815I7</accession>
<protein>
    <recommendedName>
        <fullName evidence="1">Phosphatidylglycerol--prolipoprotein diacylglyceryl transferase</fullName>
        <ecNumber evidence="1">2.5.1.145</ecNumber>
    </recommendedName>
</protein>